<dbReference type="EC" id="3.4.24.-"/>
<dbReference type="EMBL" id="AE004091">
    <property type="protein sequence ID" value="AAG05361.1"/>
    <property type="molecule type" value="Genomic_DNA"/>
</dbReference>
<dbReference type="PIR" id="E83400">
    <property type="entry name" value="E83400"/>
</dbReference>
<dbReference type="RefSeq" id="NP_250663.1">
    <property type="nucleotide sequence ID" value="NC_002516.2"/>
</dbReference>
<dbReference type="RefSeq" id="WP_010895593.1">
    <property type="nucleotide sequence ID" value="NZ_QZGE01000030.1"/>
</dbReference>
<dbReference type="SMR" id="Q9I2D2"/>
<dbReference type="FunCoup" id="Q9I2D2">
    <property type="interactions" value="458"/>
</dbReference>
<dbReference type="STRING" id="208964.PA1973"/>
<dbReference type="PaxDb" id="208964-PA1973"/>
<dbReference type="GeneID" id="878011"/>
<dbReference type="KEGG" id="pae:PA1973"/>
<dbReference type="PATRIC" id="fig|208964.12.peg.2056"/>
<dbReference type="PseudoCAP" id="PA1973"/>
<dbReference type="HOGENOM" id="CLU_021089_0_0_6"/>
<dbReference type="InParanoid" id="Q9I2D2"/>
<dbReference type="OrthoDB" id="9811314at2"/>
<dbReference type="PhylomeDB" id="Q9I2D2"/>
<dbReference type="BioCyc" id="PAER208964:G1FZ6-2011-MONOMER"/>
<dbReference type="UniPathway" id="UPA00539"/>
<dbReference type="Proteomes" id="UP000002438">
    <property type="component" value="Chromosome"/>
</dbReference>
<dbReference type="GO" id="GO:0005737">
    <property type="term" value="C:cytoplasm"/>
    <property type="evidence" value="ECO:0007669"/>
    <property type="project" value="UniProtKB-ARBA"/>
</dbReference>
<dbReference type="GO" id="GO:0042597">
    <property type="term" value="C:periplasmic space"/>
    <property type="evidence" value="ECO:0000250"/>
    <property type="project" value="PseudoCAP"/>
</dbReference>
<dbReference type="GO" id="GO:0004222">
    <property type="term" value="F:metalloendopeptidase activity"/>
    <property type="evidence" value="ECO:0007669"/>
    <property type="project" value="InterPro"/>
</dbReference>
<dbReference type="GO" id="GO:0008237">
    <property type="term" value="F:metallopeptidase activity"/>
    <property type="evidence" value="ECO:0000250"/>
    <property type="project" value="PseudoCAP"/>
</dbReference>
<dbReference type="GO" id="GO:0008270">
    <property type="term" value="F:zinc ion binding"/>
    <property type="evidence" value="ECO:0007669"/>
    <property type="project" value="InterPro"/>
</dbReference>
<dbReference type="GO" id="GO:0006508">
    <property type="term" value="P:proteolysis"/>
    <property type="evidence" value="ECO:0007669"/>
    <property type="project" value="UniProtKB-KW"/>
</dbReference>
<dbReference type="GO" id="GO:0018189">
    <property type="term" value="P:pyrroloquinoline quinone biosynthetic process"/>
    <property type="evidence" value="ECO:0007669"/>
    <property type="project" value="UniProtKB-UniPathway"/>
</dbReference>
<dbReference type="Gene3D" id="3.30.830.10">
    <property type="entry name" value="Metalloenzyme, LuxS/M16 peptidase-like"/>
    <property type="match status" value="2"/>
</dbReference>
<dbReference type="InterPro" id="IPR011249">
    <property type="entry name" value="Metalloenz_LuxS/M16"/>
</dbReference>
<dbReference type="InterPro" id="IPR011765">
    <property type="entry name" value="Pept_M16_N"/>
</dbReference>
<dbReference type="InterPro" id="IPR001431">
    <property type="entry name" value="Pept_M16_Zn_BS"/>
</dbReference>
<dbReference type="InterPro" id="IPR050626">
    <property type="entry name" value="Peptidase_M16"/>
</dbReference>
<dbReference type="InterPro" id="IPR007863">
    <property type="entry name" value="Peptidase_M16_C"/>
</dbReference>
<dbReference type="InterPro" id="IPR011844">
    <property type="entry name" value="PQQ_synth_PqqF"/>
</dbReference>
<dbReference type="InterPro" id="IPR054734">
    <property type="entry name" value="PqqF-like_C_4"/>
</dbReference>
<dbReference type="InterPro" id="IPR054733">
    <property type="entry name" value="PqqF_C_3"/>
</dbReference>
<dbReference type="NCBIfam" id="TIGR02110">
    <property type="entry name" value="PQQ_syn_pqqF"/>
    <property type="match status" value="1"/>
</dbReference>
<dbReference type="PANTHER" id="PTHR43690:SF18">
    <property type="entry name" value="INSULIN-DEGRADING ENZYME-RELATED"/>
    <property type="match status" value="1"/>
</dbReference>
<dbReference type="PANTHER" id="PTHR43690">
    <property type="entry name" value="NARDILYSIN"/>
    <property type="match status" value="1"/>
</dbReference>
<dbReference type="Pfam" id="PF00675">
    <property type="entry name" value="Peptidase_M16"/>
    <property type="match status" value="1"/>
</dbReference>
<dbReference type="Pfam" id="PF05193">
    <property type="entry name" value="Peptidase_M16_C"/>
    <property type="match status" value="1"/>
</dbReference>
<dbReference type="Pfam" id="PF22456">
    <property type="entry name" value="PqqF-like_C_4"/>
    <property type="match status" value="1"/>
</dbReference>
<dbReference type="Pfam" id="PF22455">
    <property type="entry name" value="PqqF_C_3"/>
    <property type="match status" value="1"/>
</dbReference>
<dbReference type="SUPFAM" id="SSF63411">
    <property type="entry name" value="LuxS/MPP-like metallohydrolase"/>
    <property type="match status" value="2"/>
</dbReference>
<dbReference type="PROSITE" id="PS00143">
    <property type="entry name" value="INSULINASE"/>
    <property type="match status" value="1"/>
</dbReference>
<proteinExistence type="inferred from homology"/>
<feature type="chain" id="PRO_0000074411" description="Coenzyme PQQ synthesis protein F">
    <location>
        <begin position="1"/>
        <end position="775"/>
    </location>
</feature>
<feature type="active site" description="Proton acceptor" evidence="2">
    <location>
        <position position="58"/>
    </location>
</feature>
<feature type="binding site" evidence="2">
    <location>
        <position position="55"/>
    </location>
    <ligand>
        <name>Zn(2+)</name>
        <dbReference type="ChEBI" id="CHEBI:29105"/>
    </ligand>
</feature>
<feature type="binding site" evidence="2">
    <location>
        <position position="59"/>
    </location>
    <ligand>
        <name>Zn(2+)</name>
        <dbReference type="ChEBI" id="CHEBI:29105"/>
    </ligand>
</feature>
<feature type="binding site" evidence="2">
    <location>
        <position position="136"/>
    </location>
    <ligand>
        <name>Zn(2+)</name>
        <dbReference type="ChEBI" id="CHEBI:29105"/>
    </ligand>
</feature>
<gene>
    <name type="primary">pqqF</name>
    <name type="ordered locus">PA1973</name>
</gene>
<protein>
    <recommendedName>
        <fullName>Coenzyme PQQ synthesis protein F</fullName>
        <ecNumber>3.4.24.-</ecNumber>
    </recommendedName>
    <alternativeName>
        <fullName>Pyrroloquinoline quinone biosynthesis protein F</fullName>
    </alternativeName>
</protein>
<keyword id="KW-0378">Hydrolase</keyword>
<keyword id="KW-0479">Metal-binding</keyword>
<keyword id="KW-0482">Metalloprotease</keyword>
<keyword id="KW-0884">PQQ biosynthesis</keyword>
<keyword id="KW-0645">Protease</keyword>
<keyword id="KW-1185">Reference proteome</keyword>
<keyword id="KW-0862">Zinc</keyword>
<accession>Q9I2D2</accession>
<organism>
    <name type="scientific">Pseudomonas aeruginosa (strain ATCC 15692 / DSM 22644 / CIP 104116 / JCM 14847 / LMG 12228 / 1C / PRS 101 / PAO1)</name>
    <dbReference type="NCBI Taxonomy" id="208964"/>
    <lineage>
        <taxon>Bacteria</taxon>
        <taxon>Pseudomonadati</taxon>
        <taxon>Pseudomonadota</taxon>
        <taxon>Gammaproteobacteria</taxon>
        <taxon>Pseudomonadales</taxon>
        <taxon>Pseudomonadaceae</taxon>
        <taxon>Pseudomonas</taxon>
    </lineage>
</organism>
<name>PQQF_PSEAE</name>
<sequence length="775" mass="84432">MDHHAQHHPRSHACVLPNGLRLHLAHDPAASRAAAWLRVAAGSHDEPSAHPGLAHFLEHLSFLGGAAFPGDERLMPWLQVRGGQVNASTLGKTTDYFFEVTAEHLGAGLARLIDMLARPLLDIDAQRREREVLEAEYLARSADEQTLIDAALALGLPAGHPLRRFAAGRRDSLALESDAFQRALREFHAAHYHAGNCQLWLQGPQTLDELERLAQRACADLPGRAPGASPPPPPLLPFACEALALRLPGPPRLVLGFALDALRGADEQTLLAFAELLGDRSPGGLLAALGEQGLGESVALRVVHRDARQALLALTFELFDGSAAAALEAAFFDWLGALRDDAASLLAARRPLLAEPTAPLERLRQRVLGLPAEIRPACLDALRADRCLRLHLDSELDGAEARWSAGFRLSVAPVAAAPPLAAQRHAWRFELPLPPSAAAEGALFLRWRFPGVPARSRFLALRQALRPLCGQARLGGVEMGLEALGEDWSLSLLGPRDRLEAAVRPALARLLAAPPDWRANGERLSSAERRRSATGLPIRQLLDALPGLLGEPLAEVDDWRRTRWDALVMQAAMPDPRWMPGQAAGERLEPLPPRPGRHRRELAVDGESALLLFCPLPTQEVPMEAAWRLLARLHEPAFQRRLRDELQLGYALFCGFREVGARRGLLFAAQSPRACPARLLEHMETFLQRSAEALAQLPARRLAGLRKALADDLRRAPGSFAERARRAWAEHLGGGAGRSRLLAEAALGLSGDDLLAAQARLLEARGGWWVLSSRR</sequence>
<evidence type="ECO:0000250" key="1"/>
<evidence type="ECO:0000255" key="2">
    <source>
        <dbReference type="PROSITE-ProRule" id="PRU10096"/>
    </source>
</evidence>
<evidence type="ECO:0000305" key="3"/>
<reference key="1">
    <citation type="journal article" date="2000" name="Nature">
        <title>Complete genome sequence of Pseudomonas aeruginosa PAO1, an opportunistic pathogen.</title>
        <authorList>
            <person name="Stover C.K."/>
            <person name="Pham X.-Q.T."/>
            <person name="Erwin A.L."/>
            <person name="Mizoguchi S.D."/>
            <person name="Warrener P."/>
            <person name="Hickey M.J."/>
            <person name="Brinkman F.S.L."/>
            <person name="Hufnagle W.O."/>
            <person name="Kowalik D.J."/>
            <person name="Lagrou M."/>
            <person name="Garber R.L."/>
            <person name="Goltry L."/>
            <person name="Tolentino E."/>
            <person name="Westbrock-Wadman S."/>
            <person name="Yuan Y."/>
            <person name="Brody L.L."/>
            <person name="Coulter S.N."/>
            <person name="Folger K.R."/>
            <person name="Kas A."/>
            <person name="Larbig K."/>
            <person name="Lim R.M."/>
            <person name="Smith K.A."/>
            <person name="Spencer D.H."/>
            <person name="Wong G.K.-S."/>
            <person name="Wu Z."/>
            <person name="Paulsen I.T."/>
            <person name="Reizer J."/>
            <person name="Saier M.H. Jr."/>
            <person name="Hancock R.E.W."/>
            <person name="Lory S."/>
            <person name="Olson M.V."/>
        </authorList>
    </citation>
    <scope>NUCLEOTIDE SEQUENCE [LARGE SCALE GENOMIC DNA]</scope>
    <source>
        <strain>ATCC 15692 / DSM 22644 / CIP 104116 / JCM 14847 / LMG 12228 / 1C / PRS 101 / PAO1</strain>
    </source>
</reference>
<comment type="function">
    <text evidence="1">Required for coenzyme pyrroloquinoline quinone (PQQ) biosynthesis. It is thought that this protein is a protease that cleaves peptides bond in a small peptide (gene pqqA), providing the glutamate and tyrosine residues which are necessary for the synthesis of PQQ (By similarity).</text>
</comment>
<comment type="cofactor">
    <cofactor evidence="1">
        <name>Zn(2+)</name>
        <dbReference type="ChEBI" id="CHEBI:29105"/>
    </cofactor>
    <text evidence="1">Binds 1 zinc ion per subunit.</text>
</comment>
<comment type="pathway">
    <text>Cofactor biosynthesis; pyrroloquinoline quinone biosynthesis.</text>
</comment>
<comment type="similarity">
    <text evidence="3">Belongs to the peptidase M16 family.</text>
</comment>